<sequence length="331" mass="36119">MTEPLDAALRPKSLAEYVGQARLKEKLGVYLQAAKGRKEALDHTLLFGPPGLGKTTLAHIIAAELGVNIRVTSGPAIEKPGDLAAILTNSLEEGDVLFIDEIHRLGRVAEEHLYPAMEDFKLDIVLGQGPAARTIELPLPRFTLVGATTRPGLITAPMRSRFGIIEHLEYYTPEEIGTNLLRDARLLGFGLTEEAAIEIGARSRGTMRIAKRLLRRVRDYADVAGEKTIELERAQDALDKLGLDTAGLDERDKKYLETLIHRFAGGPVGVDTLATAISEDALTLEDVYEPYLIQLGFIKRTPRGRVATAHAYDHLGLPVGAAESDLGLYTN</sequence>
<comment type="function">
    <text evidence="1">The RuvA-RuvB-RuvC complex processes Holliday junction (HJ) DNA during genetic recombination and DNA repair, while the RuvA-RuvB complex plays an important role in the rescue of blocked DNA replication forks via replication fork reversal (RFR). RuvA specifically binds to HJ cruciform DNA, conferring on it an open structure. The RuvB hexamer acts as an ATP-dependent pump, pulling dsDNA into and through the RuvAB complex. RuvB forms 2 homohexamers on either side of HJ DNA bound by 1 or 2 RuvA tetramers; 4 subunits per hexamer contact DNA at a time. Coordinated motions by a converter formed by DNA-disengaged RuvB subunits stimulates ATP hydrolysis and nucleotide exchange. Immobilization of the converter enables RuvB to convert the ATP-contained energy into a lever motion, pulling 2 nucleotides of DNA out of the RuvA tetramer per ATP hydrolyzed, thus driving DNA branch migration. The RuvB motors rotate together with the DNA substrate, which together with the progressing nucleotide cycle form the mechanistic basis for DNA recombination by continuous HJ branch migration. Branch migration allows RuvC to scan DNA until it finds its consensus sequence, where it cleaves and resolves cruciform DNA.</text>
</comment>
<comment type="catalytic activity">
    <reaction evidence="1">
        <text>ATP + H2O = ADP + phosphate + H(+)</text>
        <dbReference type="Rhea" id="RHEA:13065"/>
        <dbReference type="ChEBI" id="CHEBI:15377"/>
        <dbReference type="ChEBI" id="CHEBI:15378"/>
        <dbReference type="ChEBI" id="CHEBI:30616"/>
        <dbReference type="ChEBI" id="CHEBI:43474"/>
        <dbReference type="ChEBI" id="CHEBI:456216"/>
    </reaction>
</comment>
<comment type="subunit">
    <text evidence="1">Homohexamer. Forms an RuvA(8)-RuvB(12)-Holliday junction (HJ) complex. HJ DNA is sandwiched between 2 RuvA tetramers; dsDNA enters through RuvA and exits via RuvB. An RuvB hexamer assembles on each DNA strand where it exits the tetramer. Each RuvB hexamer is contacted by two RuvA subunits (via domain III) on 2 adjacent RuvB subunits; this complex drives branch migration. In the full resolvosome a probable DNA-RuvA(4)-RuvB(12)-RuvC(2) complex forms which resolves the HJ.</text>
</comment>
<comment type="subcellular location">
    <subcellularLocation>
        <location evidence="1">Cytoplasm</location>
    </subcellularLocation>
</comment>
<comment type="domain">
    <text evidence="1">Has 3 domains, the large (RuvB-L) and small ATPase (RuvB-S) domains and the C-terminal head (RuvB-H) domain. The head domain binds DNA, while the ATPase domains jointly bind ATP, ADP or are empty depending on the state of the subunit in the translocation cycle. During a single DNA translocation step the structure of each domain remains the same, but their relative positions change.</text>
</comment>
<comment type="similarity">
    <text evidence="1">Belongs to the RuvB family.</text>
</comment>
<proteinExistence type="inferred from homology"/>
<dbReference type="EC" id="3.6.4.-" evidence="1"/>
<dbReference type="EMBL" id="CP000359">
    <property type="protein sequence ID" value="ABF44707.1"/>
    <property type="molecule type" value="Genomic_DNA"/>
</dbReference>
<dbReference type="RefSeq" id="WP_011529551.1">
    <property type="nucleotide sequence ID" value="NC_008025.1"/>
</dbReference>
<dbReference type="SMR" id="Q1J1C7"/>
<dbReference type="STRING" id="319795.Dgeo_0404"/>
<dbReference type="KEGG" id="dge:Dgeo_0404"/>
<dbReference type="eggNOG" id="COG2255">
    <property type="taxonomic scope" value="Bacteria"/>
</dbReference>
<dbReference type="HOGENOM" id="CLU_055599_1_0_0"/>
<dbReference type="Proteomes" id="UP000002431">
    <property type="component" value="Chromosome"/>
</dbReference>
<dbReference type="GO" id="GO:0005737">
    <property type="term" value="C:cytoplasm"/>
    <property type="evidence" value="ECO:0007669"/>
    <property type="project" value="UniProtKB-SubCell"/>
</dbReference>
<dbReference type="GO" id="GO:0048476">
    <property type="term" value="C:Holliday junction resolvase complex"/>
    <property type="evidence" value="ECO:0007669"/>
    <property type="project" value="UniProtKB-UniRule"/>
</dbReference>
<dbReference type="GO" id="GO:0005524">
    <property type="term" value="F:ATP binding"/>
    <property type="evidence" value="ECO:0007669"/>
    <property type="project" value="UniProtKB-UniRule"/>
</dbReference>
<dbReference type="GO" id="GO:0016887">
    <property type="term" value="F:ATP hydrolysis activity"/>
    <property type="evidence" value="ECO:0007669"/>
    <property type="project" value="InterPro"/>
</dbReference>
<dbReference type="GO" id="GO:0000400">
    <property type="term" value="F:four-way junction DNA binding"/>
    <property type="evidence" value="ECO:0007669"/>
    <property type="project" value="UniProtKB-UniRule"/>
</dbReference>
<dbReference type="GO" id="GO:0009378">
    <property type="term" value="F:four-way junction helicase activity"/>
    <property type="evidence" value="ECO:0007669"/>
    <property type="project" value="InterPro"/>
</dbReference>
<dbReference type="GO" id="GO:0006310">
    <property type="term" value="P:DNA recombination"/>
    <property type="evidence" value="ECO:0007669"/>
    <property type="project" value="UniProtKB-UniRule"/>
</dbReference>
<dbReference type="GO" id="GO:0006281">
    <property type="term" value="P:DNA repair"/>
    <property type="evidence" value="ECO:0007669"/>
    <property type="project" value="UniProtKB-UniRule"/>
</dbReference>
<dbReference type="CDD" id="cd00009">
    <property type="entry name" value="AAA"/>
    <property type="match status" value="1"/>
</dbReference>
<dbReference type="Gene3D" id="1.10.8.60">
    <property type="match status" value="1"/>
</dbReference>
<dbReference type="Gene3D" id="3.40.50.300">
    <property type="entry name" value="P-loop containing nucleotide triphosphate hydrolases"/>
    <property type="match status" value="1"/>
</dbReference>
<dbReference type="Gene3D" id="1.10.10.10">
    <property type="entry name" value="Winged helix-like DNA-binding domain superfamily/Winged helix DNA-binding domain"/>
    <property type="match status" value="1"/>
</dbReference>
<dbReference type="HAMAP" id="MF_00016">
    <property type="entry name" value="DNA_HJ_migration_RuvB"/>
    <property type="match status" value="1"/>
</dbReference>
<dbReference type="InterPro" id="IPR003593">
    <property type="entry name" value="AAA+_ATPase"/>
</dbReference>
<dbReference type="InterPro" id="IPR041445">
    <property type="entry name" value="AAA_lid_4"/>
</dbReference>
<dbReference type="InterPro" id="IPR004605">
    <property type="entry name" value="DNA_helicase_Holl-junc_RuvB"/>
</dbReference>
<dbReference type="InterPro" id="IPR027417">
    <property type="entry name" value="P-loop_NTPase"/>
</dbReference>
<dbReference type="InterPro" id="IPR008824">
    <property type="entry name" value="RuvB-like_N"/>
</dbReference>
<dbReference type="InterPro" id="IPR008823">
    <property type="entry name" value="RuvB_C"/>
</dbReference>
<dbReference type="InterPro" id="IPR036388">
    <property type="entry name" value="WH-like_DNA-bd_sf"/>
</dbReference>
<dbReference type="InterPro" id="IPR036390">
    <property type="entry name" value="WH_DNA-bd_sf"/>
</dbReference>
<dbReference type="NCBIfam" id="NF000868">
    <property type="entry name" value="PRK00080.1"/>
    <property type="match status" value="1"/>
</dbReference>
<dbReference type="NCBIfam" id="TIGR00635">
    <property type="entry name" value="ruvB"/>
    <property type="match status" value="1"/>
</dbReference>
<dbReference type="PANTHER" id="PTHR42848">
    <property type="match status" value="1"/>
</dbReference>
<dbReference type="PANTHER" id="PTHR42848:SF1">
    <property type="entry name" value="HOLLIDAY JUNCTION BRANCH MIGRATION COMPLEX SUBUNIT RUVB"/>
    <property type="match status" value="1"/>
</dbReference>
<dbReference type="Pfam" id="PF17864">
    <property type="entry name" value="AAA_lid_4"/>
    <property type="match status" value="1"/>
</dbReference>
<dbReference type="Pfam" id="PF05491">
    <property type="entry name" value="RuvB_C"/>
    <property type="match status" value="1"/>
</dbReference>
<dbReference type="Pfam" id="PF05496">
    <property type="entry name" value="RuvB_N"/>
    <property type="match status" value="1"/>
</dbReference>
<dbReference type="SMART" id="SM00382">
    <property type="entry name" value="AAA"/>
    <property type="match status" value="1"/>
</dbReference>
<dbReference type="SUPFAM" id="SSF52540">
    <property type="entry name" value="P-loop containing nucleoside triphosphate hydrolases"/>
    <property type="match status" value="1"/>
</dbReference>
<dbReference type="SUPFAM" id="SSF46785">
    <property type="entry name" value="Winged helix' DNA-binding domain"/>
    <property type="match status" value="1"/>
</dbReference>
<protein>
    <recommendedName>
        <fullName evidence="1">Holliday junction branch migration complex subunit RuvB</fullName>
        <ecNumber evidence="1">3.6.4.-</ecNumber>
    </recommendedName>
</protein>
<feature type="chain" id="PRO_0000322792" description="Holliday junction branch migration complex subunit RuvB">
    <location>
        <begin position="1"/>
        <end position="331"/>
    </location>
</feature>
<feature type="region of interest" description="Large ATPase domain (RuvB-L)" evidence="1">
    <location>
        <begin position="1"/>
        <end position="171"/>
    </location>
</feature>
<feature type="region of interest" description="Small ATPAse domain (RuvB-S)" evidence="1">
    <location>
        <begin position="172"/>
        <end position="242"/>
    </location>
</feature>
<feature type="region of interest" description="Head domain (RuvB-H)" evidence="1">
    <location>
        <begin position="245"/>
        <end position="331"/>
    </location>
</feature>
<feature type="binding site" evidence="1">
    <location>
        <position position="9"/>
    </location>
    <ligand>
        <name>ATP</name>
        <dbReference type="ChEBI" id="CHEBI:30616"/>
    </ligand>
</feature>
<feature type="binding site" evidence="1">
    <location>
        <position position="10"/>
    </location>
    <ligand>
        <name>ATP</name>
        <dbReference type="ChEBI" id="CHEBI:30616"/>
    </ligand>
</feature>
<feature type="binding site" evidence="1">
    <location>
        <position position="51"/>
    </location>
    <ligand>
        <name>ATP</name>
        <dbReference type="ChEBI" id="CHEBI:30616"/>
    </ligand>
</feature>
<feature type="binding site" evidence="1">
    <location>
        <position position="54"/>
    </location>
    <ligand>
        <name>ATP</name>
        <dbReference type="ChEBI" id="CHEBI:30616"/>
    </ligand>
</feature>
<feature type="binding site" evidence="1">
    <location>
        <position position="55"/>
    </location>
    <ligand>
        <name>ATP</name>
        <dbReference type="ChEBI" id="CHEBI:30616"/>
    </ligand>
</feature>
<feature type="binding site" evidence="1">
    <location>
        <position position="55"/>
    </location>
    <ligand>
        <name>Mg(2+)</name>
        <dbReference type="ChEBI" id="CHEBI:18420"/>
    </ligand>
</feature>
<feature type="binding site" evidence="1">
    <location>
        <position position="56"/>
    </location>
    <ligand>
        <name>ATP</name>
        <dbReference type="ChEBI" id="CHEBI:30616"/>
    </ligand>
</feature>
<feature type="binding site" evidence="1">
    <location>
        <begin position="118"/>
        <end position="120"/>
    </location>
    <ligand>
        <name>ATP</name>
        <dbReference type="ChEBI" id="CHEBI:30616"/>
    </ligand>
</feature>
<feature type="binding site" evidence="1">
    <location>
        <position position="161"/>
    </location>
    <ligand>
        <name>ATP</name>
        <dbReference type="ChEBI" id="CHEBI:30616"/>
    </ligand>
</feature>
<feature type="binding site" evidence="1">
    <location>
        <position position="171"/>
    </location>
    <ligand>
        <name>ATP</name>
        <dbReference type="ChEBI" id="CHEBI:30616"/>
    </ligand>
</feature>
<feature type="binding site" evidence="1">
    <location>
        <position position="208"/>
    </location>
    <ligand>
        <name>ATP</name>
        <dbReference type="ChEBI" id="CHEBI:30616"/>
    </ligand>
</feature>
<feature type="binding site" evidence="1">
    <location>
        <position position="300"/>
    </location>
    <ligand>
        <name>DNA</name>
        <dbReference type="ChEBI" id="CHEBI:16991"/>
    </ligand>
</feature>
<feature type="binding site" evidence="1">
    <location>
        <position position="305"/>
    </location>
    <ligand>
        <name>DNA</name>
        <dbReference type="ChEBI" id="CHEBI:16991"/>
    </ligand>
</feature>
<organism>
    <name type="scientific">Deinococcus geothermalis (strain DSM 11300 / CIP 105573 / AG-3a)</name>
    <dbReference type="NCBI Taxonomy" id="319795"/>
    <lineage>
        <taxon>Bacteria</taxon>
        <taxon>Thermotogati</taxon>
        <taxon>Deinococcota</taxon>
        <taxon>Deinococci</taxon>
        <taxon>Deinococcales</taxon>
        <taxon>Deinococcaceae</taxon>
        <taxon>Deinococcus</taxon>
    </lineage>
</organism>
<keyword id="KW-0067">ATP-binding</keyword>
<keyword id="KW-0963">Cytoplasm</keyword>
<keyword id="KW-0227">DNA damage</keyword>
<keyword id="KW-0233">DNA recombination</keyword>
<keyword id="KW-0234">DNA repair</keyword>
<keyword id="KW-0238">DNA-binding</keyword>
<keyword id="KW-0378">Hydrolase</keyword>
<keyword id="KW-0547">Nucleotide-binding</keyword>
<name>RUVB_DEIGD</name>
<gene>
    <name evidence="1" type="primary">ruvB</name>
    <name type="ordered locus">Dgeo_0404</name>
</gene>
<accession>Q1J1C7</accession>
<reference key="1">
    <citation type="submission" date="2006-04" db="EMBL/GenBank/DDBJ databases">
        <title>Complete sequence of chromosome of Deinococcus geothermalis DSM 11300.</title>
        <authorList>
            <person name="Copeland A."/>
            <person name="Lucas S."/>
            <person name="Lapidus A."/>
            <person name="Barry K."/>
            <person name="Detter J.C."/>
            <person name="Glavina del Rio T."/>
            <person name="Hammon N."/>
            <person name="Israni S."/>
            <person name="Dalin E."/>
            <person name="Tice H."/>
            <person name="Pitluck S."/>
            <person name="Brettin T."/>
            <person name="Bruce D."/>
            <person name="Han C."/>
            <person name="Tapia R."/>
            <person name="Saunders E."/>
            <person name="Gilna P."/>
            <person name="Schmutz J."/>
            <person name="Larimer F."/>
            <person name="Land M."/>
            <person name="Hauser L."/>
            <person name="Kyrpides N."/>
            <person name="Kim E."/>
            <person name="Daly M.J."/>
            <person name="Fredrickson J.K."/>
            <person name="Makarova K.S."/>
            <person name="Gaidamakova E.K."/>
            <person name="Zhai M."/>
            <person name="Richardson P."/>
        </authorList>
    </citation>
    <scope>NUCLEOTIDE SEQUENCE [LARGE SCALE GENOMIC DNA]</scope>
    <source>
        <strain>DSM 11300 / CIP 105573 / AG-3a</strain>
    </source>
</reference>
<evidence type="ECO:0000255" key="1">
    <source>
        <dbReference type="HAMAP-Rule" id="MF_00016"/>
    </source>
</evidence>